<keyword id="KW-0067">ATP-binding</keyword>
<keyword id="KW-0963">Cytoplasm</keyword>
<keyword id="KW-0418">Kinase</keyword>
<keyword id="KW-0520">NAD</keyword>
<keyword id="KW-0521">NADP</keyword>
<keyword id="KW-0547">Nucleotide-binding</keyword>
<keyword id="KW-0808">Transferase</keyword>
<accession>A5F368</accession>
<accession>C3LYL7</accession>
<organism>
    <name type="scientific">Vibrio cholerae serotype O1 (strain ATCC 39541 / Classical Ogawa 395 / O395)</name>
    <dbReference type="NCBI Taxonomy" id="345073"/>
    <lineage>
        <taxon>Bacteria</taxon>
        <taxon>Pseudomonadati</taxon>
        <taxon>Pseudomonadota</taxon>
        <taxon>Gammaproteobacteria</taxon>
        <taxon>Vibrionales</taxon>
        <taxon>Vibrionaceae</taxon>
        <taxon>Vibrio</taxon>
    </lineage>
</organism>
<protein>
    <recommendedName>
        <fullName evidence="1">NAD kinase</fullName>
        <ecNumber evidence="1">2.7.1.23</ecNumber>
    </recommendedName>
    <alternativeName>
        <fullName evidence="1">ATP-dependent NAD kinase</fullName>
    </alternativeName>
</protein>
<proteinExistence type="inferred from homology"/>
<reference key="1">
    <citation type="submission" date="2007-03" db="EMBL/GenBank/DDBJ databases">
        <authorList>
            <person name="Heidelberg J."/>
        </authorList>
    </citation>
    <scope>NUCLEOTIDE SEQUENCE [LARGE SCALE GENOMIC DNA]</scope>
    <source>
        <strain>ATCC 39541 / Classical Ogawa 395 / O395</strain>
    </source>
</reference>
<reference key="2">
    <citation type="journal article" date="2008" name="PLoS ONE">
        <title>A recalibrated molecular clock and independent origins for the cholera pandemic clones.</title>
        <authorList>
            <person name="Feng L."/>
            <person name="Reeves P.R."/>
            <person name="Lan R."/>
            <person name="Ren Y."/>
            <person name="Gao C."/>
            <person name="Zhou Z."/>
            <person name="Ren Y."/>
            <person name="Cheng J."/>
            <person name="Wang W."/>
            <person name="Wang J."/>
            <person name="Qian W."/>
            <person name="Li D."/>
            <person name="Wang L."/>
        </authorList>
    </citation>
    <scope>NUCLEOTIDE SEQUENCE [LARGE SCALE GENOMIC DNA]</scope>
    <source>
        <strain>ATCC 39541 / Classical Ogawa 395 / O395</strain>
    </source>
</reference>
<name>NADK_VIBC3</name>
<feature type="chain" id="PRO_1000079527" description="NAD kinase">
    <location>
        <begin position="1"/>
        <end position="294"/>
    </location>
</feature>
<feature type="active site" description="Proton acceptor" evidence="1">
    <location>
        <position position="74"/>
    </location>
</feature>
<feature type="binding site" evidence="1">
    <location>
        <begin position="74"/>
        <end position="75"/>
    </location>
    <ligand>
        <name>NAD(+)</name>
        <dbReference type="ChEBI" id="CHEBI:57540"/>
    </ligand>
</feature>
<feature type="binding site" evidence="1">
    <location>
        <begin position="148"/>
        <end position="149"/>
    </location>
    <ligand>
        <name>NAD(+)</name>
        <dbReference type="ChEBI" id="CHEBI:57540"/>
    </ligand>
</feature>
<feature type="binding site" evidence="1">
    <location>
        <position position="159"/>
    </location>
    <ligand>
        <name>NAD(+)</name>
        <dbReference type="ChEBI" id="CHEBI:57540"/>
    </ligand>
</feature>
<feature type="binding site" evidence="1">
    <location>
        <position position="176"/>
    </location>
    <ligand>
        <name>NAD(+)</name>
        <dbReference type="ChEBI" id="CHEBI:57540"/>
    </ligand>
</feature>
<feature type="binding site" evidence="1">
    <location>
        <position position="178"/>
    </location>
    <ligand>
        <name>NAD(+)</name>
        <dbReference type="ChEBI" id="CHEBI:57540"/>
    </ligand>
</feature>
<feature type="binding site" evidence="1">
    <location>
        <begin position="189"/>
        <end position="194"/>
    </location>
    <ligand>
        <name>NAD(+)</name>
        <dbReference type="ChEBI" id="CHEBI:57540"/>
    </ligand>
</feature>
<feature type="binding site" evidence="1">
    <location>
        <position position="249"/>
    </location>
    <ligand>
        <name>NAD(+)</name>
        <dbReference type="ChEBI" id="CHEBI:57540"/>
    </ligand>
</feature>
<gene>
    <name evidence="1" type="primary">nadK</name>
    <name type="ordered locus">VC0395_A0379</name>
    <name type="ordered locus">VC395_0869</name>
</gene>
<evidence type="ECO:0000255" key="1">
    <source>
        <dbReference type="HAMAP-Rule" id="MF_00361"/>
    </source>
</evidence>
<dbReference type="EC" id="2.7.1.23" evidence="1"/>
<dbReference type="EMBL" id="CP000627">
    <property type="protein sequence ID" value="ABQ20840.1"/>
    <property type="molecule type" value="Genomic_DNA"/>
</dbReference>
<dbReference type="EMBL" id="CP001235">
    <property type="protein sequence ID" value="ACP08883.1"/>
    <property type="molecule type" value="Genomic_DNA"/>
</dbReference>
<dbReference type="RefSeq" id="WP_000742830.1">
    <property type="nucleotide sequence ID" value="NZ_JAACZH010000023.1"/>
</dbReference>
<dbReference type="SMR" id="A5F368"/>
<dbReference type="GeneID" id="89515030"/>
<dbReference type="KEGG" id="vco:VC0395_A0379"/>
<dbReference type="KEGG" id="vcr:VC395_0869"/>
<dbReference type="PATRIC" id="fig|345073.21.peg.841"/>
<dbReference type="eggNOG" id="COG0061">
    <property type="taxonomic scope" value="Bacteria"/>
</dbReference>
<dbReference type="HOGENOM" id="CLU_008831_0_1_6"/>
<dbReference type="OrthoDB" id="9774737at2"/>
<dbReference type="Proteomes" id="UP000000249">
    <property type="component" value="Chromosome 2"/>
</dbReference>
<dbReference type="GO" id="GO:0005737">
    <property type="term" value="C:cytoplasm"/>
    <property type="evidence" value="ECO:0007669"/>
    <property type="project" value="UniProtKB-SubCell"/>
</dbReference>
<dbReference type="GO" id="GO:0005524">
    <property type="term" value="F:ATP binding"/>
    <property type="evidence" value="ECO:0007669"/>
    <property type="project" value="UniProtKB-KW"/>
</dbReference>
<dbReference type="GO" id="GO:0046872">
    <property type="term" value="F:metal ion binding"/>
    <property type="evidence" value="ECO:0007669"/>
    <property type="project" value="UniProtKB-UniRule"/>
</dbReference>
<dbReference type="GO" id="GO:0051287">
    <property type="term" value="F:NAD binding"/>
    <property type="evidence" value="ECO:0007669"/>
    <property type="project" value="UniProtKB-ARBA"/>
</dbReference>
<dbReference type="GO" id="GO:0003951">
    <property type="term" value="F:NAD+ kinase activity"/>
    <property type="evidence" value="ECO:0007669"/>
    <property type="project" value="UniProtKB-UniRule"/>
</dbReference>
<dbReference type="GO" id="GO:0019674">
    <property type="term" value="P:NAD metabolic process"/>
    <property type="evidence" value="ECO:0007669"/>
    <property type="project" value="InterPro"/>
</dbReference>
<dbReference type="GO" id="GO:0006741">
    <property type="term" value="P:NADP biosynthetic process"/>
    <property type="evidence" value="ECO:0007669"/>
    <property type="project" value="UniProtKB-UniRule"/>
</dbReference>
<dbReference type="FunFam" id="2.60.200.30:FF:000001">
    <property type="entry name" value="NAD kinase"/>
    <property type="match status" value="1"/>
</dbReference>
<dbReference type="Gene3D" id="3.40.50.10330">
    <property type="entry name" value="Probable inorganic polyphosphate/atp-NAD kinase, domain 1"/>
    <property type="match status" value="1"/>
</dbReference>
<dbReference type="Gene3D" id="2.60.200.30">
    <property type="entry name" value="Probable inorganic polyphosphate/atp-NAD kinase, domain 2"/>
    <property type="match status" value="1"/>
</dbReference>
<dbReference type="HAMAP" id="MF_00361">
    <property type="entry name" value="NAD_kinase"/>
    <property type="match status" value="1"/>
</dbReference>
<dbReference type="InterPro" id="IPR017438">
    <property type="entry name" value="ATP-NAD_kinase_N"/>
</dbReference>
<dbReference type="InterPro" id="IPR017437">
    <property type="entry name" value="ATP-NAD_kinase_PpnK-typ_C"/>
</dbReference>
<dbReference type="InterPro" id="IPR016064">
    <property type="entry name" value="NAD/diacylglycerol_kinase_sf"/>
</dbReference>
<dbReference type="InterPro" id="IPR002504">
    <property type="entry name" value="NADK"/>
</dbReference>
<dbReference type="NCBIfam" id="NF002306">
    <property type="entry name" value="PRK01231.1"/>
    <property type="match status" value="1"/>
</dbReference>
<dbReference type="NCBIfam" id="NF002893">
    <property type="entry name" value="PRK03378.1"/>
    <property type="match status" value="1"/>
</dbReference>
<dbReference type="PANTHER" id="PTHR20275">
    <property type="entry name" value="NAD KINASE"/>
    <property type="match status" value="1"/>
</dbReference>
<dbReference type="PANTHER" id="PTHR20275:SF0">
    <property type="entry name" value="NAD KINASE"/>
    <property type="match status" value="1"/>
</dbReference>
<dbReference type="Pfam" id="PF01513">
    <property type="entry name" value="NAD_kinase"/>
    <property type="match status" value="1"/>
</dbReference>
<dbReference type="Pfam" id="PF20143">
    <property type="entry name" value="NAD_kinase_C"/>
    <property type="match status" value="1"/>
</dbReference>
<dbReference type="SUPFAM" id="SSF111331">
    <property type="entry name" value="NAD kinase/diacylglycerol kinase-like"/>
    <property type="match status" value="1"/>
</dbReference>
<sequence length="294" mass="32698">MKKPFNVLAIIGKPRDQQAIQTHKEIYHWLRSLGYTVFIDDRLREILTDLPTEHFASLIELGKKADLAIVVGGDGNMLGAARVLSRFDISVIGVNRGNLGFLTDLNPEDFQQRLQEVLDGHYLQETRFLLEAEIHRHGQVKSHNAALNEAVLHPGKIAHMIEFEVYIDDNFAFSQRSDGLIVSTPTGSTAYSLSGGGPILSPSLNAITLVPMFPHTLSCRPLVVGGNQRIKLVVSPENRGTQEVSCDGQVSLPVSPGDEIHIYQSPNVLKLIHPQDYSYYHVLRTKLGWSSKLF</sequence>
<comment type="function">
    <text evidence="1">Involved in the regulation of the intracellular balance of NAD and NADP, and is a key enzyme in the biosynthesis of NADP. Catalyzes specifically the phosphorylation on 2'-hydroxyl of the adenosine moiety of NAD to yield NADP.</text>
</comment>
<comment type="catalytic activity">
    <reaction evidence="1">
        <text>NAD(+) + ATP = ADP + NADP(+) + H(+)</text>
        <dbReference type="Rhea" id="RHEA:18629"/>
        <dbReference type="ChEBI" id="CHEBI:15378"/>
        <dbReference type="ChEBI" id="CHEBI:30616"/>
        <dbReference type="ChEBI" id="CHEBI:57540"/>
        <dbReference type="ChEBI" id="CHEBI:58349"/>
        <dbReference type="ChEBI" id="CHEBI:456216"/>
        <dbReference type="EC" id="2.7.1.23"/>
    </reaction>
</comment>
<comment type="cofactor">
    <cofactor evidence="1">
        <name>a divalent metal cation</name>
        <dbReference type="ChEBI" id="CHEBI:60240"/>
    </cofactor>
</comment>
<comment type="subcellular location">
    <subcellularLocation>
        <location evidence="1">Cytoplasm</location>
    </subcellularLocation>
</comment>
<comment type="similarity">
    <text evidence="1">Belongs to the NAD kinase family.</text>
</comment>